<name>SYS_CITBB</name>
<proteinExistence type="inferred from homology"/>
<organism>
    <name type="scientific">Citrifermentans bemidjiense (strain ATCC BAA-1014 / DSM 16622 / JCM 12645 / Bem)</name>
    <name type="common">Geobacter bemidjiensis</name>
    <dbReference type="NCBI Taxonomy" id="404380"/>
    <lineage>
        <taxon>Bacteria</taxon>
        <taxon>Pseudomonadati</taxon>
        <taxon>Thermodesulfobacteriota</taxon>
        <taxon>Desulfuromonadia</taxon>
        <taxon>Geobacterales</taxon>
        <taxon>Geobacteraceae</taxon>
        <taxon>Citrifermentans</taxon>
    </lineage>
</organism>
<dbReference type="EC" id="6.1.1.11" evidence="1"/>
<dbReference type="EMBL" id="CP001124">
    <property type="protein sequence ID" value="ACH37139.1"/>
    <property type="molecule type" value="Genomic_DNA"/>
</dbReference>
<dbReference type="RefSeq" id="WP_012528547.1">
    <property type="nucleotide sequence ID" value="NC_011146.1"/>
</dbReference>
<dbReference type="SMR" id="B5E8F6"/>
<dbReference type="STRING" id="404380.Gbem_0108"/>
<dbReference type="KEGG" id="gbm:Gbem_0108"/>
<dbReference type="eggNOG" id="COG0172">
    <property type="taxonomic scope" value="Bacteria"/>
</dbReference>
<dbReference type="HOGENOM" id="CLU_023797_1_1_7"/>
<dbReference type="OrthoDB" id="9804647at2"/>
<dbReference type="UniPathway" id="UPA00906">
    <property type="reaction ID" value="UER00895"/>
</dbReference>
<dbReference type="Proteomes" id="UP000008825">
    <property type="component" value="Chromosome"/>
</dbReference>
<dbReference type="GO" id="GO:0005737">
    <property type="term" value="C:cytoplasm"/>
    <property type="evidence" value="ECO:0007669"/>
    <property type="project" value="UniProtKB-SubCell"/>
</dbReference>
<dbReference type="GO" id="GO:0005524">
    <property type="term" value="F:ATP binding"/>
    <property type="evidence" value="ECO:0007669"/>
    <property type="project" value="UniProtKB-UniRule"/>
</dbReference>
<dbReference type="GO" id="GO:0004828">
    <property type="term" value="F:serine-tRNA ligase activity"/>
    <property type="evidence" value="ECO:0007669"/>
    <property type="project" value="UniProtKB-UniRule"/>
</dbReference>
<dbReference type="GO" id="GO:0016260">
    <property type="term" value="P:selenocysteine biosynthetic process"/>
    <property type="evidence" value="ECO:0007669"/>
    <property type="project" value="UniProtKB-UniRule"/>
</dbReference>
<dbReference type="GO" id="GO:0006434">
    <property type="term" value="P:seryl-tRNA aminoacylation"/>
    <property type="evidence" value="ECO:0007669"/>
    <property type="project" value="UniProtKB-UniRule"/>
</dbReference>
<dbReference type="CDD" id="cd00770">
    <property type="entry name" value="SerRS_core"/>
    <property type="match status" value="1"/>
</dbReference>
<dbReference type="Gene3D" id="3.30.930.10">
    <property type="entry name" value="Bira Bifunctional Protein, Domain 2"/>
    <property type="match status" value="1"/>
</dbReference>
<dbReference type="Gene3D" id="1.10.287.40">
    <property type="entry name" value="Serine-tRNA synthetase, tRNA binding domain"/>
    <property type="match status" value="1"/>
</dbReference>
<dbReference type="HAMAP" id="MF_00176">
    <property type="entry name" value="Ser_tRNA_synth_type1"/>
    <property type="match status" value="1"/>
</dbReference>
<dbReference type="InterPro" id="IPR002314">
    <property type="entry name" value="aa-tRNA-synt_IIb"/>
</dbReference>
<dbReference type="InterPro" id="IPR006195">
    <property type="entry name" value="aa-tRNA-synth_II"/>
</dbReference>
<dbReference type="InterPro" id="IPR045864">
    <property type="entry name" value="aa-tRNA-synth_II/BPL/LPL"/>
</dbReference>
<dbReference type="InterPro" id="IPR002317">
    <property type="entry name" value="Ser-tRNA-ligase_type_1"/>
</dbReference>
<dbReference type="InterPro" id="IPR015866">
    <property type="entry name" value="Ser-tRNA-synth_1_N"/>
</dbReference>
<dbReference type="InterPro" id="IPR042103">
    <property type="entry name" value="SerRS_1_N_sf"/>
</dbReference>
<dbReference type="InterPro" id="IPR033729">
    <property type="entry name" value="SerRS_core"/>
</dbReference>
<dbReference type="InterPro" id="IPR010978">
    <property type="entry name" value="tRNA-bd_arm"/>
</dbReference>
<dbReference type="NCBIfam" id="TIGR00414">
    <property type="entry name" value="serS"/>
    <property type="match status" value="1"/>
</dbReference>
<dbReference type="PANTHER" id="PTHR43697:SF1">
    <property type="entry name" value="SERINE--TRNA LIGASE"/>
    <property type="match status" value="1"/>
</dbReference>
<dbReference type="PANTHER" id="PTHR43697">
    <property type="entry name" value="SERYL-TRNA SYNTHETASE"/>
    <property type="match status" value="1"/>
</dbReference>
<dbReference type="Pfam" id="PF02403">
    <property type="entry name" value="Seryl_tRNA_N"/>
    <property type="match status" value="1"/>
</dbReference>
<dbReference type="Pfam" id="PF00587">
    <property type="entry name" value="tRNA-synt_2b"/>
    <property type="match status" value="1"/>
</dbReference>
<dbReference type="PIRSF" id="PIRSF001529">
    <property type="entry name" value="Ser-tRNA-synth_IIa"/>
    <property type="match status" value="1"/>
</dbReference>
<dbReference type="PRINTS" id="PR00981">
    <property type="entry name" value="TRNASYNTHSER"/>
</dbReference>
<dbReference type="SUPFAM" id="SSF55681">
    <property type="entry name" value="Class II aaRS and biotin synthetases"/>
    <property type="match status" value="1"/>
</dbReference>
<dbReference type="SUPFAM" id="SSF46589">
    <property type="entry name" value="tRNA-binding arm"/>
    <property type="match status" value="1"/>
</dbReference>
<dbReference type="PROSITE" id="PS50862">
    <property type="entry name" value="AA_TRNA_LIGASE_II"/>
    <property type="match status" value="1"/>
</dbReference>
<sequence>MLDARYIRENLETVEARLKTRGEGVDIALFKELDGRRRELLQQSETLKALRNKVTEEIARLQDKSQAAERKTEMREVSQQIKGIDESLRSVEEELQNFLLTVPNVPNETTPIGKSEEDNVVVRTWGEVPTLSFEPKPHWEIGEGLGILDFERGAKLAGARFTLYRGAGARLERALINYMLDLHTDEHKYIEMLPPFMVNRECMTGTGQLPKFEEDLFHMEGVDFFLIPTAEVPVTNIHRGEILKGSDLPISYVAYTPCFRKEAGSYGKDTRGLIRQHQFNKVELVKFTSPEDSYQQLQKLLGHAEEVLRRLQIPYRVVELCTGDIGFSAAKTFDIEVWLPGQNCYREISSCSCFEDFQARRAGIRFRPEEKAKPEFVHTLNGSGLAVGRTLVAVLENYQQADGSVLIPEVLRPYMGGAERIS</sequence>
<accession>B5E8F6</accession>
<gene>
    <name evidence="1" type="primary">serS</name>
    <name type="ordered locus">Gbem_0108</name>
</gene>
<reference key="1">
    <citation type="submission" date="2008-07" db="EMBL/GenBank/DDBJ databases">
        <title>Complete sequence of Geobacter bemidjiensis BEM.</title>
        <authorList>
            <consortium name="US DOE Joint Genome Institute"/>
            <person name="Lucas S."/>
            <person name="Copeland A."/>
            <person name="Lapidus A."/>
            <person name="Glavina del Rio T."/>
            <person name="Dalin E."/>
            <person name="Tice H."/>
            <person name="Bruce D."/>
            <person name="Goodwin L."/>
            <person name="Pitluck S."/>
            <person name="Kiss H."/>
            <person name="Brettin T."/>
            <person name="Detter J.C."/>
            <person name="Han C."/>
            <person name="Kuske C.R."/>
            <person name="Schmutz J."/>
            <person name="Larimer F."/>
            <person name="Land M."/>
            <person name="Hauser L."/>
            <person name="Kyrpides N."/>
            <person name="Lykidis A."/>
            <person name="Lovley D."/>
            <person name="Richardson P."/>
        </authorList>
    </citation>
    <scope>NUCLEOTIDE SEQUENCE [LARGE SCALE GENOMIC DNA]</scope>
    <source>
        <strain>ATCC BAA-1014 / DSM 16622 / JCM 12645 / Bem</strain>
    </source>
</reference>
<evidence type="ECO:0000255" key="1">
    <source>
        <dbReference type="HAMAP-Rule" id="MF_00176"/>
    </source>
</evidence>
<keyword id="KW-0030">Aminoacyl-tRNA synthetase</keyword>
<keyword id="KW-0067">ATP-binding</keyword>
<keyword id="KW-0963">Cytoplasm</keyword>
<keyword id="KW-0436">Ligase</keyword>
<keyword id="KW-0547">Nucleotide-binding</keyword>
<keyword id="KW-0648">Protein biosynthesis</keyword>
<keyword id="KW-1185">Reference proteome</keyword>
<comment type="function">
    <text evidence="1">Catalyzes the attachment of serine to tRNA(Ser). Is also able to aminoacylate tRNA(Sec) with serine, to form the misacylated tRNA L-seryl-tRNA(Sec), which will be further converted into selenocysteinyl-tRNA(Sec).</text>
</comment>
<comment type="catalytic activity">
    <reaction evidence="1">
        <text>tRNA(Ser) + L-serine + ATP = L-seryl-tRNA(Ser) + AMP + diphosphate + H(+)</text>
        <dbReference type="Rhea" id="RHEA:12292"/>
        <dbReference type="Rhea" id="RHEA-COMP:9669"/>
        <dbReference type="Rhea" id="RHEA-COMP:9703"/>
        <dbReference type="ChEBI" id="CHEBI:15378"/>
        <dbReference type="ChEBI" id="CHEBI:30616"/>
        <dbReference type="ChEBI" id="CHEBI:33019"/>
        <dbReference type="ChEBI" id="CHEBI:33384"/>
        <dbReference type="ChEBI" id="CHEBI:78442"/>
        <dbReference type="ChEBI" id="CHEBI:78533"/>
        <dbReference type="ChEBI" id="CHEBI:456215"/>
        <dbReference type="EC" id="6.1.1.11"/>
    </reaction>
</comment>
<comment type="catalytic activity">
    <reaction evidence="1">
        <text>tRNA(Sec) + L-serine + ATP = L-seryl-tRNA(Sec) + AMP + diphosphate + H(+)</text>
        <dbReference type="Rhea" id="RHEA:42580"/>
        <dbReference type="Rhea" id="RHEA-COMP:9742"/>
        <dbReference type="Rhea" id="RHEA-COMP:10128"/>
        <dbReference type="ChEBI" id="CHEBI:15378"/>
        <dbReference type="ChEBI" id="CHEBI:30616"/>
        <dbReference type="ChEBI" id="CHEBI:33019"/>
        <dbReference type="ChEBI" id="CHEBI:33384"/>
        <dbReference type="ChEBI" id="CHEBI:78442"/>
        <dbReference type="ChEBI" id="CHEBI:78533"/>
        <dbReference type="ChEBI" id="CHEBI:456215"/>
        <dbReference type="EC" id="6.1.1.11"/>
    </reaction>
</comment>
<comment type="pathway">
    <text evidence="1">Aminoacyl-tRNA biosynthesis; selenocysteinyl-tRNA(Sec) biosynthesis; L-seryl-tRNA(Sec) from L-serine and tRNA(Sec): step 1/1.</text>
</comment>
<comment type="subunit">
    <text evidence="1">Homodimer. The tRNA molecule binds across the dimer.</text>
</comment>
<comment type="subcellular location">
    <subcellularLocation>
        <location evidence="1">Cytoplasm</location>
    </subcellularLocation>
</comment>
<comment type="domain">
    <text evidence="1">Consists of two distinct domains, a catalytic core and a N-terminal extension that is involved in tRNA binding.</text>
</comment>
<comment type="similarity">
    <text evidence="1">Belongs to the class-II aminoacyl-tRNA synthetase family. Type-1 seryl-tRNA synthetase subfamily.</text>
</comment>
<protein>
    <recommendedName>
        <fullName evidence="1">Serine--tRNA ligase</fullName>
        <ecNumber evidence="1">6.1.1.11</ecNumber>
    </recommendedName>
    <alternativeName>
        <fullName evidence="1">Seryl-tRNA synthetase</fullName>
        <shortName evidence="1">SerRS</shortName>
    </alternativeName>
    <alternativeName>
        <fullName evidence="1">Seryl-tRNA(Ser/Sec) synthetase</fullName>
    </alternativeName>
</protein>
<feature type="chain" id="PRO_1000098071" description="Serine--tRNA ligase">
    <location>
        <begin position="1"/>
        <end position="422"/>
    </location>
</feature>
<feature type="binding site" evidence="1">
    <location>
        <begin position="229"/>
        <end position="231"/>
    </location>
    <ligand>
        <name>L-serine</name>
        <dbReference type="ChEBI" id="CHEBI:33384"/>
    </ligand>
</feature>
<feature type="binding site" evidence="1">
    <location>
        <begin position="260"/>
        <end position="262"/>
    </location>
    <ligand>
        <name>ATP</name>
        <dbReference type="ChEBI" id="CHEBI:30616"/>
    </ligand>
</feature>
<feature type="binding site" evidence="1">
    <location>
        <position position="283"/>
    </location>
    <ligand>
        <name>L-serine</name>
        <dbReference type="ChEBI" id="CHEBI:33384"/>
    </ligand>
</feature>
<feature type="binding site" evidence="1">
    <location>
        <begin position="347"/>
        <end position="350"/>
    </location>
    <ligand>
        <name>ATP</name>
        <dbReference type="ChEBI" id="CHEBI:30616"/>
    </ligand>
</feature>
<feature type="binding site" evidence="1">
    <location>
        <position position="383"/>
    </location>
    <ligand>
        <name>L-serine</name>
        <dbReference type="ChEBI" id="CHEBI:33384"/>
    </ligand>
</feature>